<accession>A4W500</accession>
<keyword id="KW-0240">DNA-directed RNA polymerase</keyword>
<keyword id="KW-0548">Nucleotidyltransferase</keyword>
<keyword id="KW-0804">Transcription</keyword>
<keyword id="KW-0808">Transferase</keyword>
<protein>
    <recommendedName>
        <fullName evidence="1">DNA-directed RNA polymerase subunit omega</fullName>
        <shortName evidence="1">RNAP omega subunit</shortName>
        <ecNumber evidence="1">2.7.7.6</ecNumber>
    </recommendedName>
    <alternativeName>
        <fullName evidence="1">RNA polymerase omega subunit</fullName>
    </alternativeName>
    <alternativeName>
        <fullName evidence="1">Transcriptase subunit omega</fullName>
    </alternativeName>
</protein>
<gene>
    <name evidence="1" type="primary">rpoZ</name>
    <name type="ordered locus">Ent638_0090</name>
</gene>
<feature type="chain" id="PRO_1000059912" description="DNA-directed RNA polymerase subunit omega">
    <location>
        <begin position="1"/>
        <end position="91"/>
    </location>
</feature>
<evidence type="ECO:0000255" key="1">
    <source>
        <dbReference type="HAMAP-Rule" id="MF_00366"/>
    </source>
</evidence>
<reference key="1">
    <citation type="journal article" date="2010" name="PLoS Genet.">
        <title>Genome sequence of the plant growth promoting endophytic bacterium Enterobacter sp. 638.</title>
        <authorList>
            <person name="Taghavi S."/>
            <person name="van der Lelie D."/>
            <person name="Hoffman A."/>
            <person name="Zhang Y.B."/>
            <person name="Walla M.D."/>
            <person name="Vangronsveld J."/>
            <person name="Newman L."/>
            <person name="Monchy S."/>
        </authorList>
    </citation>
    <scope>NUCLEOTIDE SEQUENCE [LARGE SCALE GENOMIC DNA]</scope>
    <source>
        <strain>638</strain>
    </source>
</reference>
<comment type="function">
    <text evidence="1">Promotes RNA polymerase assembly. Latches the N- and C-terminal regions of the beta' subunit thereby facilitating its interaction with the beta and alpha subunits.</text>
</comment>
<comment type="catalytic activity">
    <reaction evidence="1">
        <text>RNA(n) + a ribonucleoside 5'-triphosphate = RNA(n+1) + diphosphate</text>
        <dbReference type="Rhea" id="RHEA:21248"/>
        <dbReference type="Rhea" id="RHEA-COMP:14527"/>
        <dbReference type="Rhea" id="RHEA-COMP:17342"/>
        <dbReference type="ChEBI" id="CHEBI:33019"/>
        <dbReference type="ChEBI" id="CHEBI:61557"/>
        <dbReference type="ChEBI" id="CHEBI:140395"/>
        <dbReference type="EC" id="2.7.7.6"/>
    </reaction>
</comment>
<comment type="subunit">
    <text evidence="1">The RNAP catalytic core consists of 2 alpha, 1 beta, 1 beta' and 1 omega subunit. When a sigma factor is associated with the core the holoenzyme is formed, which can initiate transcription.</text>
</comment>
<comment type="similarity">
    <text evidence="1">Belongs to the RNA polymerase subunit omega family.</text>
</comment>
<dbReference type="EC" id="2.7.7.6" evidence="1"/>
<dbReference type="EMBL" id="CP000653">
    <property type="protein sequence ID" value="ABP58780.1"/>
    <property type="molecule type" value="Genomic_DNA"/>
</dbReference>
<dbReference type="RefSeq" id="WP_011915358.1">
    <property type="nucleotide sequence ID" value="NC_009436.1"/>
</dbReference>
<dbReference type="SMR" id="A4W500"/>
<dbReference type="STRING" id="399742.Ent638_0090"/>
<dbReference type="GeneID" id="93307265"/>
<dbReference type="KEGG" id="ent:Ent638_0090"/>
<dbReference type="eggNOG" id="COG1758">
    <property type="taxonomic scope" value="Bacteria"/>
</dbReference>
<dbReference type="HOGENOM" id="CLU_125406_5_3_6"/>
<dbReference type="OrthoDB" id="9796300at2"/>
<dbReference type="Proteomes" id="UP000000230">
    <property type="component" value="Chromosome"/>
</dbReference>
<dbReference type="GO" id="GO:0000428">
    <property type="term" value="C:DNA-directed RNA polymerase complex"/>
    <property type="evidence" value="ECO:0007669"/>
    <property type="project" value="UniProtKB-KW"/>
</dbReference>
<dbReference type="GO" id="GO:0003677">
    <property type="term" value="F:DNA binding"/>
    <property type="evidence" value="ECO:0007669"/>
    <property type="project" value="UniProtKB-UniRule"/>
</dbReference>
<dbReference type="GO" id="GO:0003899">
    <property type="term" value="F:DNA-directed RNA polymerase activity"/>
    <property type="evidence" value="ECO:0007669"/>
    <property type="project" value="UniProtKB-UniRule"/>
</dbReference>
<dbReference type="GO" id="GO:0006351">
    <property type="term" value="P:DNA-templated transcription"/>
    <property type="evidence" value="ECO:0007669"/>
    <property type="project" value="UniProtKB-UniRule"/>
</dbReference>
<dbReference type="FunFam" id="3.90.940.10:FF:000001">
    <property type="entry name" value="DNA-directed RNA polymerase subunit omega"/>
    <property type="match status" value="1"/>
</dbReference>
<dbReference type="Gene3D" id="3.90.940.10">
    <property type="match status" value="1"/>
</dbReference>
<dbReference type="HAMAP" id="MF_00366">
    <property type="entry name" value="RNApol_bact_RpoZ"/>
    <property type="match status" value="1"/>
</dbReference>
<dbReference type="InterPro" id="IPR003716">
    <property type="entry name" value="DNA-dir_RNA_pol_omega"/>
</dbReference>
<dbReference type="InterPro" id="IPR006110">
    <property type="entry name" value="Pol_omega/Rpo6/RPB6"/>
</dbReference>
<dbReference type="InterPro" id="IPR036161">
    <property type="entry name" value="RPB6/omega-like_sf"/>
</dbReference>
<dbReference type="NCBIfam" id="TIGR00690">
    <property type="entry name" value="rpoZ"/>
    <property type="match status" value="1"/>
</dbReference>
<dbReference type="PANTHER" id="PTHR34476">
    <property type="entry name" value="DNA-DIRECTED RNA POLYMERASE SUBUNIT OMEGA"/>
    <property type="match status" value="1"/>
</dbReference>
<dbReference type="PANTHER" id="PTHR34476:SF1">
    <property type="entry name" value="DNA-DIRECTED RNA POLYMERASE SUBUNIT OMEGA"/>
    <property type="match status" value="1"/>
</dbReference>
<dbReference type="Pfam" id="PF01192">
    <property type="entry name" value="RNA_pol_Rpb6"/>
    <property type="match status" value="1"/>
</dbReference>
<dbReference type="SMART" id="SM01409">
    <property type="entry name" value="RNA_pol_Rpb6"/>
    <property type="match status" value="1"/>
</dbReference>
<dbReference type="SUPFAM" id="SSF63562">
    <property type="entry name" value="RPB6/omega subunit-like"/>
    <property type="match status" value="1"/>
</dbReference>
<organism>
    <name type="scientific">Enterobacter sp. (strain 638)</name>
    <dbReference type="NCBI Taxonomy" id="399742"/>
    <lineage>
        <taxon>Bacteria</taxon>
        <taxon>Pseudomonadati</taxon>
        <taxon>Pseudomonadota</taxon>
        <taxon>Gammaproteobacteria</taxon>
        <taxon>Enterobacterales</taxon>
        <taxon>Enterobacteriaceae</taxon>
        <taxon>Enterobacter</taxon>
    </lineage>
</organism>
<name>RPOZ_ENT38</name>
<proteinExistence type="inferred from homology"/>
<sequence>MARVTVQDAVEKIGNRFDLVLVAARRARQMQSGGKDPLVPEENDKTTVIALREIEEGLITNQILDVRERQEQQEQEAAELQAVTAIAEGRR</sequence>